<proteinExistence type="inferred from homology"/>
<comment type="function">
    <text evidence="1">Digests double-stranded RNA. Involved in the processing of primary rRNA transcript to yield the immediate precursors to the large and small rRNAs (23S and 16S). Processes some mRNAs, and tRNAs when they are encoded in the rRNA operon. Processes pre-crRNA and tracrRNA of type II CRISPR loci if present in the organism.</text>
</comment>
<comment type="catalytic activity">
    <reaction evidence="1">
        <text>Endonucleolytic cleavage to 5'-phosphomonoester.</text>
        <dbReference type="EC" id="3.1.26.3"/>
    </reaction>
</comment>
<comment type="cofactor">
    <cofactor evidence="1">
        <name>Mg(2+)</name>
        <dbReference type="ChEBI" id="CHEBI:18420"/>
    </cofactor>
</comment>
<comment type="subunit">
    <text evidence="1">Homodimer.</text>
</comment>
<comment type="subcellular location">
    <subcellularLocation>
        <location evidence="1">Cytoplasm</location>
    </subcellularLocation>
</comment>
<comment type="similarity">
    <text evidence="1">Belongs to the ribonuclease III family.</text>
</comment>
<accession>Q1JMX4</accession>
<dbReference type="EC" id="3.1.26.3" evidence="1"/>
<dbReference type="EMBL" id="CP000259">
    <property type="protein sequence ID" value="ABF31625.1"/>
    <property type="molecule type" value="Genomic_DNA"/>
</dbReference>
<dbReference type="RefSeq" id="WP_002990670.1">
    <property type="nucleotide sequence ID" value="NC_008021.1"/>
</dbReference>
<dbReference type="SMR" id="Q1JMX4"/>
<dbReference type="KEGG" id="spk:MGAS9429_Spy0437"/>
<dbReference type="HOGENOM" id="CLU_000907_1_3_9"/>
<dbReference type="Proteomes" id="UP000002433">
    <property type="component" value="Chromosome"/>
</dbReference>
<dbReference type="GO" id="GO:0005737">
    <property type="term" value="C:cytoplasm"/>
    <property type="evidence" value="ECO:0007669"/>
    <property type="project" value="UniProtKB-SubCell"/>
</dbReference>
<dbReference type="GO" id="GO:0003725">
    <property type="term" value="F:double-stranded RNA binding"/>
    <property type="evidence" value="ECO:0007669"/>
    <property type="project" value="TreeGrafter"/>
</dbReference>
<dbReference type="GO" id="GO:0046872">
    <property type="term" value="F:metal ion binding"/>
    <property type="evidence" value="ECO:0007669"/>
    <property type="project" value="UniProtKB-KW"/>
</dbReference>
<dbReference type="GO" id="GO:0004525">
    <property type="term" value="F:ribonuclease III activity"/>
    <property type="evidence" value="ECO:0007669"/>
    <property type="project" value="UniProtKB-UniRule"/>
</dbReference>
<dbReference type="GO" id="GO:0019843">
    <property type="term" value="F:rRNA binding"/>
    <property type="evidence" value="ECO:0007669"/>
    <property type="project" value="UniProtKB-KW"/>
</dbReference>
<dbReference type="GO" id="GO:0006397">
    <property type="term" value="P:mRNA processing"/>
    <property type="evidence" value="ECO:0007669"/>
    <property type="project" value="UniProtKB-UniRule"/>
</dbReference>
<dbReference type="GO" id="GO:0010468">
    <property type="term" value="P:regulation of gene expression"/>
    <property type="evidence" value="ECO:0007669"/>
    <property type="project" value="TreeGrafter"/>
</dbReference>
<dbReference type="GO" id="GO:0006364">
    <property type="term" value="P:rRNA processing"/>
    <property type="evidence" value="ECO:0007669"/>
    <property type="project" value="UniProtKB-UniRule"/>
</dbReference>
<dbReference type="GO" id="GO:0008033">
    <property type="term" value="P:tRNA processing"/>
    <property type="evidence" value="ECO:0007669"/>
    <property type="project" value="UniProtKB-KW"/>
</dbReference>
<dbReference type="CDD" id="cd10845">
    <property type="entry name" value="DSRM_RNAse_III_family"/>
    <property type="match status" value="1"/>
</dbReference>
<dbReference type="CDD" id="cd00593">
    <property type="entry name" value="RIBOc"/>
    <property type="match status" value="1"/>
</dbReference>
<dbReference type="FunFam" id="1.10.1520.10:FF:000001">
    <property type="entry name" value="Ribonuclease 3"/>
    <property type="match status" value="1"/>
</dbReference>
<dbReference type="FunFam" id="3.30.160.20:FF:000003">
    <property type="entry name" value="Ribonuclease 3"/>
    <property type="match status" value="1"/>
</dbReference>
<dbReference type="Gene3D" id="3.30.160.20">
    <property type="match status" value="1"/>
</dbReference>
<dbReference type="Gene3D" id="1.10.1520.10">
    <property type="entry name" value="Ribonuclease III domain"/>
    <property type="match status" value="1"/>
</dbReference>
<dbReference type="HAMAP" id="MF_00104">
    <property type="entry name" value="RNase_III"/>
    <property type="match status" value="1"/>
</dbReference>
<dbReference type="InterPro" id="IPR014720">
    <property type="entry name" value="dsRBD_dom"/>
</dbReference>
<dbReference type="InterPro" id="IPR011907">
    <property type="entry name" value="RNase_III"/>
</dbReference>
<dbReference type="InterPro" id="IPR000999">
    <property type="entry name" value="RNase_III_dom"/>
</dbReference>
<dbReference type="InterPro" id="IPR036389">
    <property type="entry name" value="RNase_III_sf"/>
</dbReference>
<dbReference type="NCBIfam" id="TIGR02191">
    <property type="entry name" value="RNaseIII"/>
    <property type="match status" value="1"/>
</dbReference>
<dbReference type="PANTHER" id="PTHR11207:SF0">
    <property type="entry name" value="RIBONUCLEASE 3"/>
    <property type="match status" value="1"/>
</dbReference>
<dbReference type="PANTHER" id="PTHR11207">
    <property type="entry name" value="RIBONUCLEASE III"/>
    <property type="match status" value="1"/>
</dbReference>
<dbReference type="Pfam" id="PF00035">
    <property type="entry name" value="dsrm"/>
    <property type="match status" value="1"/>
</dbReference>
<dbReference type="Pfam" id="PF14622">
    <property type="entry name" value="Ribonucleas_3_3"/>
    <property type="match status" value="1"/>
</dbReference>
<dbReference type="SMART" id="SM00358">
    <property type="entry name" value="DSRM"/>
    <property type="match status" value="1"/>
</dbReference>
<dbReference type="SMART" id="SM00535">
    <property type="entry name" value="RIBOc"/>
    <property type="match status" value="1"/>
</dbReference>
<dbReference type="SUPFAM" id="SSF54768">
    <property type="entry name" value="dsRNA-binding domain-like"/>
    <property type="match status" value="1"/>
</dbReference>
<dbReference type="SUPFAM" id="SSF69065">
    <property type="entry name" value="RNase III domain-like"/>
    <property type="match status" value="1"/>
</dbReference>
<dbReference type="PROSITE" id="PS50137">
    <property type="entry name" value="DS_RBD"/>
    <property type="match status" value="1"/>
</dbReference>
<dbReference type="PROSITE" id="PS00517">
    <property type="entry name" value="RNASE_3_1"/>
    <property type="match status" value="1"/>
</dbReference>
<dbReference type="PROSITE" id="PS50142">
    <property type="entry name" value="RNASE_3_2"/>
    <property type="match status" value="1"/>
</dbReference>
<feature type="chain" id="PRO_1000075836" description="Ribonuclease 3">
    <location>
        <begin position="1"/>
        <end position="230"/>
    </location>
</feature>
<feature type="domain" description="RNase III" evidence="1">
    <location>
        <begin position="1"/>
        <end position="134"/>
    </location>
</feature>
<feature type="domain" description="DRBM" evidence="1">
    <location>
        <begin position="160"/>
        <end position="229"/>
    </location>
</feature>
<feature type="active site" evidence="1">
    <location>
        <position position="51"/>
    </location>
</feature>
<feature type="active site" evidence="1">
    <location>
        <position position="123"/>
    </location>
</feature>
<feature type="binding site" evidence="1">
    <location>
        <position position="47"/>
    </location>
    <ligand>
        <name>Mg(2+)</name>
        <dbReference type="ChEBI" id="CHEBI:18420"/>
    </ligand>
</feature>
<feature type="binding site" evidence="1">
    <location>
        <position position="120"/>
    </location>
    <ligand>
        <name>Mg(2+)</name>
        <dbReference type="ChEBI" id="CHEBI:18420"/>
    </ligand>
</feature>
<feature type="binding site" evidence="1">
    <location>
        <position position="123"/>
    </location>
    <ligand>
        <name>Mg(2+)</name>
        <dbReference type="ChEBI" id="CHEBI:18420"/>
    </ligand>
</feature>
<evidence type="ECO:0000255" key="1">
    <source>
        <dbReference type="HAMAP-Rule" id="MF_00104"/>
    </source>
</evidence>
<keyword id="KW-0963">Cytoplasm</keyword>
<keyword id="KW-0255">Endonuclease</keyword>
<keyword id="KW-0378">Hydrolase</keyword>
<keyword id="KW-0460">Magnesium</keyword>
<keyword id="KW-0479">Metal-binding</keyword>
<keyword id="KW-0507">mRNA processing</keyword>
<keyword id="KW-0540">Nuclease</keyword>
<keyword id="KW-0694">RNA-binding</keyword>
<keyword id="KW-0698">rRNA processing</keyword>
<keyword id="KW-0699">rRNA-binding</keyword>
<keyword id="KW-0819">tRNA processing</keyword>
<organism>
    <name type="scientific">Streptococcus pyogenes serotype M12 (strain MGAS9429)</name>
    <dbReference type="NCBI Taxonomy" id="370551"/>
    <lineage>
        <taxon>Bacteria</taxon>
        <taxon>Bacillati</taxon>
        <taxon>Bacillota</taxon>
        <taxon>Bacilli</taxon>
        <taxon>Lactobacillales</taxon>
        <taxon>Streptococcaceae</taxon>
        <taxon>Streptococcus</taxon>
    </lineage>
</organism>
<name>RNC_STRPC</name>
<gene>
    <name evidence="1" type="primary">rnc</name>
    <name type="ordered locus">MGAS9429_Spy0437</name>
</gene>
<protein>
    <recommendedName>
        <fullName evidence="1">Ribonuclease 3</fullName>
        <ecNumber evidence="1">3.1.26.3</ecNumber>
    </recommendedName>
    <alternativeName>
        <fullName evidence="1">Ribonuclease III</fullName>
        <shortName evidence="1">RNase III</shortName>
    </alternativeName>
</protein>
<sequence length="230" mass="25848">MKQLEELLSTSFDIQFNDLTLLETAFTHTSYANEHRLLNVSHNERLEFLGDAVLQLIISEYLFAKYPKKTEGDMSKLRSMIVREESLAGFSRFCSFDAYIKLGKGEEKSGGRRRDTILGDLFEAFLGALLLDKGIDAVRRFLKQVMIPQVEKGNFERVKDYKTCLQEFLQTKGDVAIDYQVISEKGPAHAKQFEVSIVVNGAVLSKGLGKSKKLAEQDAAKNALAQLSEV</sequence>
<reference key="1">
    <citation type="journal article" date="2006" name="Proc. Natl. Acad. Sci. U.S.A.">
        <title>Molecular genetic anatomy of inter- and intraserotype variation in the human bacterial pathogen group A Streptococcus.</title>
        <authorList>
            <person name="Beres S.B."/>
            <person name="Richter E.W."/>
            <person name="Nagiec M.J."/>
            <person name="Sumby P."/>
            <person name="Porcella S.F."/>
            <person name="DeLeo F.R."/>
            <person name="Musser J.M."/>
        </authorList>
    </citation>
    <scope>NUCLEOTIDE SEQUENCE [LARGE SCALE GENOMIC DNA]</scope>
    <source>
        <strain>MGAS9429</strain>
    </source>
</reference>